<proteinExistence type="inferred from homology"/>
<name>THIE_HYPNA</name>
<accession>Q0BXD3</accession>
<keyword id="KW-0460">Magnesium</keyword>
<keyword id="KW-0479">Metal-binding</keyword>
<keyword id="KW-1185">Reference proteome</keyword>
<keyword id="KW-0784">Thiamine biosynthesis</keyword>
<keyword id="KW-0808">Transferase</keyword>
<reference key="1">
    <citation type="journal article" date="2006" name="J. Bacteriol.">
        <title>Comparative genomic evidence for a close relationship between the dimorphic prosthecate bacteria Hyphomonas neptunium and Caulobacter crescentus.</title>
        <authorList>
            <person name="Badger J.H."/>
            <person name="Hoover T.R."/>
            <person name="Brun Y.V."/>
            <person name="Weiner R.M."/>
            <person name="Laub M.T."/>
            <person name="Alexandre G."/>
            <person name="Mrazek J."/>
            <person name="Ren Q."/>
            <person name="Paulsen I.T."/>
            <person name="Nelson K.E."/>
            <person name="Khouri H.M."/>
            <person name="Radune D."/>
            <person name="Sosa J."/>
            <person name="Dodson R.J."/>
            <person name="Sullivan S.A."/>
            <person name="Rosovitz M.J."/>
            <person name="Madupu R."/>
            <person name="Brinkac L.M."/>
            <person name="Durkin A.S."/>
            <person name="Daugherty S.C."/>
            <person name="Kothari S.P."/>
            <person name="Giglio M.G."/>
            <person name="Zhou L."/>
            <person name="Haft D.H."/>
            <person name="Selengut J.D."/>
            <person name="Davidsen T.M."/>
            <person name="Yang Q."/>
            <person name="Zafar N."/>
            <person name="Ward N.L."/>
        </authorList>
    </citation>
    <scope>NUCLEOTIDE SEQUENCE [LARGE SCALE GENOMIC DNA]</scope>
    <source>
        <strain>ATCC 15444</strain>
    </source>
</reference>
<protein>
    <recommendedName>
        <fullName evidence="1">Thiamine-phosphate synthase</fullName>
        <shortName evidence="1">TP synthase</shortName>
        <shortName evidence="1">TPS</shortName>
        <ecNumber evidence="1">2.5.1.3</ecNumber>
    </recommendedName>
    <alternativeName>
        <fullName evidence="1">Thiamine-phosphate pyrophosphorylase</fullName>
        <shortName evidence="1">TMP pyrophosphorylase</shortName>
        <shortName evidence="1">TMP-PPase</shortName>
    </alternativeName>
</protein>
<evidence type="ECO:0000255" key="1">
    <source>
        <dbReference type="HAMAP-Rule" id="MF_00097"/>
    </source>
</evidence>
<feature type="chain" id="PRO_0000336399" description="Thiamine-phosphate synthase">
    <location>
        <begin position="1"/>
        <end position="221"/>
    </location>
</feature>
<feature type="binding site" evidence="1">
    <location>
        <begin position="44"/>
        <end position="48"/>
    </location>
    <ligand>
        <name>4-amino-2-methyl-5-(diphosphooxymethyl)pyrimidine</name>
        <dbReference type="ChEBI" id="CHEBI:57841"/>
    </ligand>
</feature>
<feature type="binding site" evidence="1">
    <location>
        <position position="80"/>
    </location>
    <ligand>
        <name>4-amino-2-methyl-5-(diphosphooxymethyl)pyrimidine</name>
        <dbReference type="ChEBI" id="CHEBI:57841"/>
    </ligand>
</feature>
<feature type="binding site" evidence="1">
    <location>
        <position position="81"/>
    </location>
    <ligand>
        <name>Mg(2+)</name>
        <dbReference type="ChEBI" id="CHEBI:18420"/>
    </ligand>
</feature>
<feature type="binding site" evidence="1">
    <location>
        <position position="100"/>
    </location>
    <ligand>
        <name>Mg(2+)</name>
        <dbReference type="ChEBI" id="CHEBI:18420"/>
    </ligand>
</feature>
<feature type="binding site" evidence="1">
    <location>
        <position position="119"/>
    </location>
    <ligand>
        <name>4-amino-2-methyl-5-(diphosphooxymethyl)pyrimidine</name>
        <dbReference type="ChEBI" id="CHEBI:57841"/>
    </ligand>
</feature>
<feature type="binding site" evidence="1">
    <location>
        <begin position="146"/>
        <end position="148"/>
    </location>
    <ligand>
        <name>2-[(2R,5Z)-2-carboxy-4-methylthiazol-5(2H)-ylidene]ethyl phosphate</name>
        <dbReference type="ChEBI" id="CHEBI:62899"/>
    </ligand>
</feature>
<feature type="binding site" evidence="1">
    <location>
        <position position="149"/>
    </location>
    <ligand>
        <name>4-amino-2-methyl-5-(diphosphooxymethyl)pyrimidine</name>
        <dbReference type="ChEBI" id="CHEBI:57841"/>
    </ligand>
</feature>
<feature type="binding site" evidence="1">
    <location>
        <position position="176"/>
    </location>
    <ligand>
        <name>2-[(2R,5Z)-2-carboxy-4-methylthiazol-5(2H)-ylidene]ethyl phosphate</name>
        <dbReference type="ChEBI" id="CHEBI:62899"/>
    </ligand>
</feature>
<dbReference type="EC" id="2.5.1.3" evidence="1"/>
<dbReference type="EMBL" id="CP000158">
    <property type="protein sequence ID" value="ABI75590.1"/>
    <property type="molecule type" value="Genomic_DNA"/>
</dbReference>
<dbReference type="RefSeq" id="WP_011648156.1">
    <property type="nucleotide sequence ID" value="NC_008358.1"/>
</dbReference>
<dbReference type="SMR" id="Q0BXD3"/>
<dbReference type="STRING" id="228405.HNE_3185"/>
<dbReference type="KEGG" id="hne:HNE_3185"/>
<dbReference type="eggNOG" id="COG0352">
    <property type="taxonomic scope" value="Bacteria"/>
</dbReference>
<dbReference type="HOGENOM" id="CLU_018272_3_1_5"/>
<dbReference type="UniPathway" id="UPA00060">
    <property type="reaction ID" value="UER00141"/>
</dbReference>
<dbReference type="Proteomes" id="UP000001959">
    <property type="component" value="Chromosome"/>
</dbReference>
<dbReference type="GO" id="GO:0005737">
    <property type="term" value="C:cytoplasm"/>
    <property type="evidence" value="ECO:0007669"/>
    <property type="project" value="TreeGrafter"/>
</dbReference>
<dbReference type="GO" id="GO:0000287">
    <property type="term" value="F:magnesium ion binding"/>
    <property type="evidence" value="ECO:0007669"/>
    <property type="project" value="UniProtKB-UniRule"/>
</dbReference>
<dbReference type="GO" id="GO:0004789">
    <property type="term" value="F:thiamine-phosphate diphosphorylase activity"/>
    <property type="evidence" value="ECO:0007669"/>
    <property type="project" value="UniProtKB-UniRule"/>
</dbReference>
<dbReference type="GO" id="GO:0009228">
    <property type="term" value="P:thiamine biosynthetic process"/>
    <property type="evidence" value="ECO:0007669"/>
    <property type="project" value="UniProtKB-KW"/>
</dbReference>
<dbReference type="GO" id="GO:0009229">
    <property type="term" value="P:thiamine diphosphate biosynthetic process"/>
    <property type="evidence" value="ECO:0007669"/>
    <property type="project" value="UniProtKB-UniRule"/>
</dbReference>
<dbReference type="CDD" id="cd00564">
    <property type="entry name" value="TMP_TenI"/>
    <property type="match status" value="1"/>
</dbReference>
<dbReference type="Gene3D" id="3.20.20.70">
    <property type="entry name" value="Aldolase class I"/>
    <property type="match status" value="1"/>
</dbReference>
<dbReference type="HAMAP" id="MF_00097">
    <property type="entry name" value="TMP_synthase"/>
    <property type="match status" value="1"/>
</dbReference>
<dbReference type="InterPro" id="IPR013785">
    <property type="entry name" value="Aldolase_TIM"/>
</dbReference>
<dbReference type="InterPro" id="IPR036206">
    <property type="entry name" value="ThiamineP_synth_sf"/>
</dbReference>
<dbReference type="InterPro" id="IPR022998">
    <property type="entry name" value="ThiamineP_synth_TenI"/>
</dbReference>
<dbReference type="InterPro" id="IPR034291">
    <property type="entry name" value="TMP_synthase"/>
</dbReference>
<dbReference type="NCBIfam" id="TIGR00693">
    <property type="entry name" value="thiE"/>
    <property type="match status" value="1"/>
</dbReference>
<dbReference type="PANTHER" id="PTHR20857">
    <property type="entry name" value="THIAMINE-PHOSPHATE PYROPHOSPHORYLASE"/>
    <property type="match status" value="1"/>
</dbReference>
<dbReference type="PANTHER" id="PTHR20857:SF15">
    <property type="entry name" value="THIAMINE-PHOSPHATE SYNTHASE"/>
    <property type="match status" value="1"/>
</dbReference>
<dbReference type="Pfam" id="PF02581">
    <property type="entry name" value="TMP-TENI"/>
    <property type="match status" value="1"/>
</dbReference>
<dbReference type="SUPFAM" id="SSF51391">
    <property type="entry name" value="Thiamin phosphate synthase"/>
    <property type="match status" value="1"/>
</dbReference>
<gene>
    <name evidence="1" type="primary">thiE</name>
    <name type="ordered locus">HNE_3185</name>
</gene>
<comment type="function">
    <text evidence="1">Condenses 4-methyl-5-(beta-hydroxyethyl)thiazole monophosphate (THZ-P) and 2-methyl-4-amino-5-hydroxymethyl pyrimidine pyrophosphate (HMP-PP) to form thiamine monophosphate (TMP).</text>
</comment>
<comment type="catalytic activity">
    <reaction evidence="1">
        <text>2-[(2R,5Z)-2-carboxy-4-methylthiazol-5(2H)-ylidene]ethyl phosphate + 4-amino-2-methyl-5-(diphosphooxymethyl)pyrimidine + 2 H(+) = thiamine phosphate + CO2 + diphosphate</text>
        <dbReference type="Rhea" id="RHEA:47844"/>
        <dbReference type="ChEBI" id="CHEBI:15378"/>
        <dbReference type="ChEBI" id="CHEBI:16526"/>
        <dbReference type="ChEBI" id="CHEBI:33019"/>
        <dbReference type="ChEBI" id="CHEBI:37575"/>
        <dbReference type="ChEBI" id="CHEBI:57841"/>
        <dbReference type="ChEBI" id="CHEBI:62899"/>
        <dbReference type="EC" id="2.5.1.3"/>
    </reaction>
</comment>
<comment type="catalytic activity">
    <reaction evidence="1">
        <text>2-(2-carboxy-4-methylthiazol-5-yl)ethyl phosphate + 4-amino-2-methyl-5-(diphosphooxymethyl)pyrimidine + 2 H(+) = thiamine phosphate + CO2 + diphosphate</text>
        <dbReference type="Rhea" id="RHEA:47848"/>
        <dbReference type="ChEBI" id="CHEBI:15378"/>
        <dbReference type="ChEBI" id="CHEBI:16526"/>
        <dbReference type="ChEBI" id="CHEBI:33019"/>
        <dbReference type="ChEBI" id="CHEBI:37575"/>
        <dbReference type="ChEBI" id="CHEBI:57841"/>
        <dbReference type="ChEBI" id="CHEBI:62890"/>
        <dbReference type="EC" id="2.5.1.3"/>
    </reaction>
</comment>
<comment type="catalytic activity">
    <reaction evidence="1">
        <text>4-methyl-5-(2-phosphooxyethyl)-thiazole + 4-amino-2-methyl-5-(diphosphooxymethyl)pyrimidine + H(+) = thiamine phosphate + diphosphate</text>
        <dbReference type="Rhea" id="RHEA:22328"/>
        <dbReference type="ChEBI" id="CHEBI:15378"/>
        <dbReference type="ChEBI" id="CHEBI:33019"/>
        <dbReference type="ChEBI" id="CHEBI:37575"/>
        <dbReference type="ChEBI" id="CHEBI:57841"/>
        <dbReference type="ChEBI" id="CHEBI:58296"/>
        <dbReference type="EC" id="2.5.1.3"/>
    </reaction>
</comment>
<comment type="cofactor">
    <cofactor evidence="1">
        <name>Mg(2+)</name>
        <dbReference type="ChEBI" id="CHEBI:18420"/>
    </cofactor>
    <text evidence="1">Binds 1 Mg(2+) ion per subunit.</text>
</comment>
<comment type="pathway">
    <text evidence="1">Cofactor biosynthesis; thiamine diphosphate biosynthesis; thiamine phosphate from 4-amino-2-methyl-5-diphosphomethylpyrimidine and 4-methyl-5-(2-phosphoethyl)-thiazole: step 1/1.</text>
</comment>
<comment type="similarity">
    <text evidence="1">Belongs to the thiamine-phosphate synthase family.</text>
</comment>
<organism>
    <name type="scientific">Hyphomonas neptunium (strain ATCC 15444)</name>
    <dbReference type="NCBI Taxonomy" id="228405"/>
    <lineage>
        <taxon>Bacteria</taxon>
        <taxon>Pseudomonadati</taxon>
        <taxon>Pseudomonadota</taxon>
        <taxon>Alphaproteobacteria</taxon>
        <taxon>Hyphomonadales</taxon>
        <taxon>Hyphomonadaceae</taxon>
        <taxon>Hyphomonas</taxon>
    </lineage>
</organism>
<sequence>MTDTAQPRPRTRLYLITPPQIGDVSAFRKSLEETLSAGDVASLQLRLKGQDGMIDMQATQEVGAAVTAMAQEAGVAVLINDAAELSRQLGADGVHLGWDDMPVKTARALLGPDAIIGATAKNSYHRAMQAGEDGADYVAFGAFYPTTTKEGTIPAELELLEVWQSAMILPCVAIGGITVSNAAPLVTAGADFLAVSSGVWNHEDGPAAAVRAFNALFESLA</sequence>